<feature type="chain" id="PRO_0000134900" description="Molybdenum cofactor guanylyltransferase">
    <location>
        <begin position="1"/>
        <end position="191"/>
    </location>
</feature>
<feature type="binding site" evidence="1">
    <location>
        <begin position="13"/>
        <end position="15"/>
    </location>
    <ligand>
        <name>GTP</name>
        <dbReference type="ChEBI" id="CHEBI:37565"/>
    </ligand>
</feature>
<feature type="binding site" evidence="1">
    <location>
        <position position="26"/>
    </location>
    <ligand>
        <name>GTP</name>
        <dbReference type="ChEBI" id="CHEBI:37565"/>
    </ligand>
</feature>
<feature type="binding site" evidence="1">
    <location>
        <position position="72"/>
    </location>
    <ligand>
        <name>GTP</name>
        <dbReference type="ChEBI" id="CHEBI:37565"/>
    </ligand>
</feature>
<feature type="binding site" evidence="1">
    <location>
        <position position="102"/>
    </location>
    <ligand>
        <name>GTP</name>
        <dbReference type="ChEBI" id="CHEBI:37565"/>
    </ligand>
</feature>
<feature type="binding site" evidence="1">
    <location>
        <position position="102"/>
    </location>
    <ligand>
        <name>Mg(2+)</name>
        <dbReference type="ChEBI" id="CHEBI:18420"/>
    </ligand>
</feature>
<evidence type="ECO:0000255" key="1">
    <source>
        <dbReference type="HAMAP-Rule" id="MF_00316"/>
    </source>
</evidence>
<comment type="function">
    <text evidence="1">Transfers a GMP moiety from GTP to Mo-molybdopterin (Mo-MPT) cofactor (Moco or molybdenum cofactor) to form Mo-molybdopterin guanine dinucleotide (Mo-MGD) cofactor.</text>
</comment>
<comment type="catalytic activity">
    <reaction evidence="1">
        <text>Mo-molybdopterin + GTP + H(+) = Mo-molybdopterin guanine dinucleotide + diphosphate</text>
        <dbReference type="Rhea" id="RHEA:34243"/>
        <dbReference type="ChEBI" id="CHEBI:15378"/>
        <dbReference type="ChEBI" id="CHEBI:33019"/>
        <dbReference type="ChEBI" id="CHEBI:37565"/>
        <dbReference type="ChEBI" id="CHEBI:71302"/>
        <dbReference type="ChEBI" id="CHEBI:71310"/>
        <dbReference type="EC" id="2.7.7.77"/>
    </reaction>
</comment>
<comment type="cofactor">
    <cofactor evidence="1">
        <name>Mg(2+)</name>
        <dbReference type="ChEBI" id="CHEBI:18420"/>
    </cofactor>
</comment>
<comment type="subunit">
    <text evidence="1">Monomer.</text>
</comment>
<comment type="subcellular location">
    <subcellularLocation>
        <location evidence="1">Cytoplasm</location>
    </subcellularLocation>
</comment>
<comment type="domain">
    <text evidence="1">The N-terminal domain determines nucleotide recognition and specific binding, while the C-terminal domain determines the specific binding to the target protein.</text>
</comment>
<comment type="similarity">
    <text evidence="1">Belongs to the MobA family.</text>
</comment>
<protein>
    <recommendedName>
        <fullName evidence="1">Molybdenum cofactor guanylyltransferase</fullName>
        <shortName evidence="1">MoCo guanylyltransferase</shortName>
        <ecNumber evidence="1">2.7.7.77</ecNumber>
    </recommendedName>
    <alternativeName>
        <fullName evidence="1">GTP:molybdopterin guanylyltransferase</fullName>
    </alternativeName>
    <alternativeName>
        <fullName evidence="1">Mo-MPT guanylyltransferase</fullName>
    </alternativeName>
    <alternativeName>
        <fullName evidence="1">Molybdopterin guanylyltransferase</fullName>
    </alternativeName>
    <alternativeName>
        <fullName evidence="1">Molybdopterin-guanine dinucleotide synthase</fullName>
        <shortName evidence="1">MGD synthase</shortName>
    </alternativeName>
</protein>
<gene>
    <name evidence="1" type="primary">mobA</name>
</gene>
<proteinExistence type="inferred from homology"/>
<dbReference type="EC" id="2.7.7.77" evidence="1"/>
<dbReference type="EMBL" id="AJ242952">
    <property type="protein sequence ID" value="CAB44986.1"/>
    <property type="molecule type" value="Genomic_DNA"/>
</dbReference>
<dbReference type="RefSeq" id="WP_021782951.1">
    <property type="nucleotide sequence ID" value="NZ_SPUT01000025.1"/>
</dbReference>
<dbReference type="SMR" id="Q9WWW0"/>
<dbReference type="GO" id="GO:0005737">
    <property type="term" value="C:cytoplasm"/>
    <property type="evidence" value="ECO:0007669"/>
    <property type="project" value="UniProtKB-SubCell"/>
</dbReference>
<dbReference type="GO" id="GO:0005525">
    <property type="term" value="F:GTP binding"/>
    <property type="evidence" value="ECO:0007669"/>
    <property type="project" value="UniProtKB-UniRule"/>
</dbReference>
<dbReference type="GO" id="GO:0046872">
    <property type="term" value="F:metal ion binding"/>
    <property type="evidence" value="ECO:0007669"/>
    <property type="project" value="UniProtKB-KW"/>
</dbReference>
<dbReference type="GO" id="GO:0061603">
    <property type="term" value="F:molybdenum cofactor guanylyltransferase activity"/>
    <property type="evidence" value="ECO:0007669"/>
    <property type="project" value="UniProtKB-EC"/>
</dbReference>
<dbReference type="GO" id="GO:1902758">
    <property type="term" value="P:bis(molybdopterin guanine dinucleotide)molybdenum biosynthetic process"/>
    <property type="evidence" value="ECO:0007669"/>
    <property type="project" value="TreeGrafter"/>
</dbReference>
<dbReference type="CDD" id="cd02503">
    <property type="entry name" value="MobA"/>
    <property type="match status" value="1"/>
</dbReference>
<dbReference type="Gene3D" id="3.90.550.10">
    <property type="entry name" value="Spore Coat Polysaccharide Biosynthesis Protein SpsA, Chain A"/>
    <property type="match status" value="1"/>
</dbReference>
<dbReference type="HAMAP" id="MF_00316">
    <property type="entry name" value="MobA"/>
    <property type="match status" value="1"/>
</dbReference>
<dbReference type="InterPro" id="IPR025877">
    <property type="entry name" value="MobA-like_NTP_Trfase"/>
</dbReference>
<dbReference type="InterPro" id="IPR013482">
    <property type="entry name" value="Molybde_CF_guanTrfase"/>
</dbReference>
<dbReference type="InterPro" id="IPR029044">
    <property type="entry name" value="Nucleotide-diphossugar_trans"/>
</dbReference>
<dbReference type="NCBIfam" id="TIGR02665">
    <property type="entry name" value="molyb_mobA"/>
    <property type="match status" value="1"/>
</dbReference>
<dbReference type="PANTHER" id="PTHR19136">
    <property type="entry name" value="MOLYBDENUM COFACTOR GUANYLYLTRANSFERASE"/>
    <property type="match status" value="1"/>
</dbReference>
<dbReference type="PANTHER" id="PTHR19136:SF81">
    <property type="entry name" value="MOLYBDENUM COFACTOR GUANYLYLTRANSFERASE"/>
    <property type="match status" value="1"/>
</dbReference>
<dbReference type="Pfam" id="PF12804">
    <property type="entry name" value="NTP_transf_3"/>
    <property type="match status" value="1"/>
</dbReference>
<dbReference type="SUPFAM" id="SSF53448">
    <property type="entry name" value="Nucleotide-diphospho-sugar transferases"/>
    <property type="match status" value="1"/>
</dbReference>
<keyword id="KW-0963">Cytoplasm</keyword>
<keyword id="KW-0342">GTP-binding</keyword>
<keyword id="KW-0460">Magnesium</keyword>
<keyword id="KW-0479">Metal-binding</keyword>
<keyword id="KW-0501">Molybdenum cofactor biosynthesis</keyword>
<keyword id="KW-0547">Nucleotide-binding</keyword>
<keyword id="KW-0808">Transferase</keyword>
<accession>Q9WWW0</accession>
<organism>
    <name type="scientific">Pseudomonas putida</name>
    <name type="common">Arthrobacter siderocapsulatus</name>
    <dbReference type="NCBI Taxonomy" id="303"/>
    <lineage>
        <taxon>Bacteria</taxon>
        <taxon>Pseudomonadati</taxon>
        <taxon>Pseudomonadota</taxon>
        <taxon>Gammaproteobacteria</taxon>
        <taxon>Pseudomonadales</taxon>
        <taxon>Pseudomonadaceae</taxon>
        <taxon>Pseudomonas</taxon>
    </lineage>
</organism>
<sequence>MPDALPPCSILILAGGRGQRMGGRDKGLVDWQGEPLIAHVHRVVRPLSDDLVISCNRNQAAYRPYADRLVGDAEADFPGPLAGVIAGLRVARHGWVVVLACDAPLVDRELIEGLLRLAVTGNSAAMVRQGGFWQPMFSVLPKRVLPVLEQAWAAGERSLQKALLREAVQGLECAESDRRLSNFNSPDRLQD</sequence>
<name>MOBA_PSEPU</name>
<reference key="1">
    <citation type="submission" date="1999-06" db="EMBL/GenBank/DDBJ databases">
        <title>The Sequence of the mobA gene of Pseudomonas putida 86.</title>
        <authorList>
            <person name="Widdick D."/>
            <person name="Palmer T."/>
        </authorList>
    </citation>
    <scope>NUCLEOTIDE SEQUENCE [GENOMIC DNA]</scope>
    <source>
        <strain>86</strain>
    </source>
</reference>